<sequence length="601" mass="64322">MSFALKTIYSPSPATTRGKPVVLGGDPKGNNFLYTCGNAVIIRNIKNPNQADIYYEHAQPATVAKYAPSGFYIASGDLSGTLRIWDTTQLEHPLKIELKVLSGPIADIAWSADSQRLVVVGDGKERFGAAILWDSGASVGEITGHSKAIASCDFKATRPFRVITGAEDFQANWFEGPPFKFKHAFKEHTRFLTCVRFSPDGEKVLTVGLDKKGFILDGKTGEKVGALAGGADAHALGIYSCSWSPDSKKVLTVSADKSAKIWDDKGTLLTTFAFEGGVESQLLGSLWQGDTLLAVNLNGDIFSLDQNNPKTPARTLKGHNKLVTSLAFDTASKALYSGSYDGVILQWNLETGIAVPIAGTGHTSSVTQAVVQGNKLVSVSVDDTTRFTPLNPPQYAAQGAKLDSQPQSVAVAQGKDIAVVVTLNSVVVLQGEKVASTTAVKYQPTVVRVSVDGSEVAVGAKDNSIHIYSLSGTTLSEQAVLSGHRGFLTAIAYSPDGKHFASADQNRDIFVWDKASRKIKVEGWVYHNARVTSLAWNSNSNNIVTGSLDSHVYVWSVSEPSKHIAIKNAHRGGVNAVLWVDEHTVASAGLDCSIKTWTIKN</sequence>
<evidence type="ECO:0000305" key="1"/>
<accession>P90587</accession>
<dbReference type="EMBL" id="U86011">
    <property type="protein sequence ID" value="AAC26321.1"/>
    <property type="molecule type" value="mRNA"/>
</dbReference>
<dbReference type="PIR" id="JE0238">
    <property type="entry name" value="JE0238"/>
</dbReference>
<dbReference type="SMR" id="P90587"/>
<dbReference type="GO" id="GO:0030864">
    <property type="term" value="C:cortical actin cytoskeleton"/>
    <property type="evidence" value="ECO:0007669"/>
    <property type="project" value="TreeGrafter"/>
</dbReference>
<dbReference type="GO" id="GO:0051015">
    <property type="term" value="F:actin filament binding"/>
    <property type="evidence" value="ECO:0007669"/>
    <property type="project" value="TreeGrafter"/>
</dbReference>
<dbReference type="GO" id="GO:0030042">
    <property type="term" value="P:actin filament depolymerization"/>
    <property type="evidence" value="ECO:0007669"/>
    <property type="project" value="TreeGrafter"/>
</dbReference>
<dbReference type="CDD" id="cd00200">
    <property type="entry name" value="WD40"/>
    <property type="match status" value="1"/>
</dbReference>
<dbReference type="FunFam" id="2.130.10.10:FF:000102">
    <property type="entry name" value="Actin-interacting protein 1"/>
    <property type="match status" value="1"/>
</dbReference>
<dbReference type="FunFam" id="2.130.10.10:FF:000167">
    <property type="entry name" value="Actin-interacting protein 1"/>
    <property type="match status" value="1"/>
</dbReference>
<dbReference type="Gene3D" id="2.130.10.10">
    <property type="entry name" value="YVTN repeat-like/Quinoprotein amine dehydrogenase"/>
    <property type="match status" value="2"/>
</dbReference>
<dbReference type="InterPro" id="IPR015943">
    <property type="entry name" value="WD40/YVTN_repeat-like_dom_sf"/>
</dbReference>
<dbReference type="InterPro" id="IPR036322">
    <property type="entry name" value="WD40_repeat_dom_sf"/>
</dbReference>
<dbReference type="InterPro" id="IPR001680">
    <property type="entry name" value="WD40_rpt"/>
</dbReference>
<dbReference type="PANTHER" id="PTHR19856:SF0">
    <property type="entry name" value="WD REPEAT-CONTAINING PROTEIN 1"/>
    <property type="match status" value="1"/>
</dbReference>
<dbReference type="PANTHER" id="PTHR19856">
    <property type="entry name" value="WD-REPEATCONTAINING PROTEIN WDR1"/>
    <property type="match status" value="1"/>
</dbReference>
<dbReference type="Pfam" id="PF00400">
    <property type="entry name" value="WD40"/>
    <property type="match status" value="7"/>
</dbReference>
<dbReference type="SMART" id="SM00320">
    <property type="entry name" value="WD40"/>
    <property type="match status" value="10"/>
</dbReference>
<dbReference type="SUPFAM" id="SSF50978">
    <property type="entry name" value="WD40 repeat-like"/>
    <property type="match status" value="2"/>
</dbReference>
<dbReference type="PROSITE" id="PS50082">
    <property type="entry name" value="WD_REPEATS_2"/>
    <property type="match status" value="6"/>
</dbReference>
<dbReference type="PROSITE" id="PS50294">
    <property type="entry name" value="WD_REPEATS_REGION"/>
    <property type="match status" value="1"/>
</dbReference>
<proteinExistence type="evidence at transcript level"/>
<name>WD66_PHYPO</name>
<protein>
    <recommendedName>
        <fullName>66 kDa stress protein</fullName>
    </recommendedName>
    <alternativeName>
        <fullName>p66</fullName>
    </alternativeName>
</protein>
<organism>
    <name type="scientific">Physarum polycephalum</name>
    <name type="common">Slime mold</name>
    <dbReference type="NCBI Taxonomy" id="5791"/>
    <lineage>
        <taxon>Eukaryota</taxon>
        <taxon>Amoebozoa</taxon>
        <taxon>Evosea</taxon>
        <taxon>Eumycetozoa</taxon>
        <taxon>Myxogastria</taxon>
        <taxon>Myxogastromycetidae</taxon>
        <taxon>Physariida</taxon>
        <taxon>Physaraceae</taxon>
        <taxon>Physarum</taxon>
    </lineage>
</organism>
<feature type="chain" id="PRO_0000051334" description="66 kDa stress protein">
    <location>
        <begin position="1"/>
        <end position="601"/>
    </location>
</feature>
<feature type="repeat" description="WD 1">
    <location>
        <begin position="56"/>
        <end position="95"/>
    </location>
</feature>
<feature type="repeat" description="WD 2">
    <location>
        <begin position="100"/>
        <end position="143"/>
    </location>
</feature>
<feature type="repeat" description="WD 3">
    <location>
        <begin position="145"/>
        <end position="184"/>
    </location>
</feature>
<feature type="repeat" description="WD 4">
    <location>
        <begin position="187"/>
        <end position="226"/>
    </location>
</feature>
<feature type="repeat" description="WD 5">
    <location>
        <begin position="233"/>
        <end position="272"/>
    </location>
</feature>
<feature type="repeat" description="WD 6">
    <location>
        <begin position="318"/>
        <end position="357"/>
    </location>
</feature>
<feature type="repeat" description="WD 7">
    <location>
        <begin position="435"/>
        <end position="478"/>
    </location>
</feature>
<feature type="repeat" description="WD 8">
    <location>
        <begin position="483"/>
        <end position="522"/>
    </location>
</feature>
<feature type="repeat" description="WD 9">
    <location>
        <begin position="526"/>
        <end position="565"/>
    </location>
</feature>
<feature type="repeat" description="WD 10">
    <location>
        <begin position="569"/>
        <end position="600"/>
    </location>
</feature>
<keyword id="KW-0677">Repeat</keyword>
<keyword id="KW-0853">WD repeat</keyword>
<reference key="1">
    <citation type="journal article" date="1998" name="J. Biochem.">
        <title>A novel 66-kDa stress protein, p66, associated with the process of cyst formation of Physarum polycephalum is a Physarum homologue of a yeast actin-interacting protein, AIP1.</title>
        <authorList>
            <person name="Matsumoto S."/>
            <person name="Ogawa M."/>
            <person name="Kasakura T."/>
            <person name="Shimada Y."/>
            <person name="Mitsui M."/>
            <person name="Maruya M."/>
            <person name="Isohata M."/>
            <person name="Yahara I."/>
            <person name="Murakami-Murofushi K."/>
        </authorList>
    </citation>
    <scope>NUCLEOTIDE SEQUENCE [MRNA]</scope>
</reference>
<comment type="function">
    <text>Associated with the process of cyst formation.</text>
</comment>
<comment type="similarity">
    <text evidence="1">Belongs to the WD repeat AIP1 family.</text>
</comment>